<reference key="1">
    <citation type="journal article" date="2011" name="J. Bacteriol.">
        <title>Comparative genomics of 28 Salmonella enterica isolates: evidence for CRISPR-mediated adaptive sublineage evolution.</title>
        <authorList>
            <person name="Fricke W.F."/>
            <person name="Mammel M.K."/>
            <person name="McDermott P.F."/>
            <person name="Tartera C."/>
            <person name="White D.G."/>
            <person name="Leclerc J.E."/>
            <person name="Ravel J."/>
            <person name="Cebula T.A."/>
        </authorList>
    </citation>
    <scope>NUCLEOTIDE SEQUENCE [LARGE SCALE GENOMIC DNA]</scope>
    <source>
        <strain>SL476</strain>
    </source>
</reference>
<sequence>MTASLHIILDTDPGIDDAAAIAAALFAPQLDLQLITTVAGNVSVEKTTRNALQLLHFWNSDIPLAQGAATPLLRPLRDAAYVHGESGMEGYDFVDHQRQPLAKPAFIAIRDVLMNAPEPMTLVAIGPLTNIALLLMHYPECACNIRRLVLMGGSAGRGNFTPNAEFNIAVDPEAAALVFRSGLEIVMCGLDVTNQAMLSPDFLNKLPALNRTGKMLHSLFNHYRSGSMRTGVRMHDLCAIAWLVRPELFTLQSCFVAVETQGQYTAGTTVVDIEGRLGQPANAQVALALDVDGFRQWVAEVFACAP</sequence>
<proteinExistence type="inferred from homology"/>
<comment type="function">
    <text evidence="1">Hydrolyzes both purine and pyrimidine ribonucleosides with a broad-substrate specificity.</text>
</comment>
<comment type="similarity">
    <text evidence="1">Belongs to the IUNH family. RihC subfamily.</text>
</comment>
<gene>
    <name evidence="1" type="primary">rihC</name>
    <name type="ordered locus">SeHA_C0055</name>
</gene>
<evidence type="ECO:0000255" key="1">
    <source>
        <dbReference type="HAMAP-Rule" id="MF_01432"/>
    </source>
</evidence>
<protein>
    <recommendedName>
        <fullName evidence="1">Non-specific ribonucleoside hydrolase RihC</fullName>
        <ecNumber evidence="1">3.2.-.-</ecNumber>
    </recommendedName>
    <alternativeName>
        <fullName evidence="1">Purine/pyrimidine ribonucleoside hydrolase</fullName>
    </alternativeName>
</protein>
<organism>
    <name type="scientific">Salmonella heidelberg (strain SL476)</name>
    <dbReference type="NCBI Taxonomy" id="454169"/>
    <lineage>
        <taxon>Bacteria</taxon>
        <taxon>Pseudomonadati</taxon>
        <taxon>Pseudomonadota</taxon>
        <taxon>Gammaproteobacteria</taxon>
        <taxon>Enterobacterales</taxon>
        <taxon>Enterobacteriaceae</taxon>
        <taxon>Salmonella</taxon>
    </lineage>
</organism>
<name>RIHC_SALHS</name>
<accession>B4TIF1</accession>
<dbReference type="EC" id="3.2.-.-" evidence="1"/>
<dbReference type="EMBL" id="CP001120">
    <property type="protein sequence ID" value="ACF70008.1"/>
    <property type="molecule type" value="Genomic_DNA"/>
</dbReference>
<dbReference type="RefSeq" id="WP_000127281.1">
    <property type="nucleotide sequence ID" value="NC_011083.1"/>
</dbReference>
<dbReference type="SMR" id="B4TIF1"/>
<dbReference type="KEGG" id="seh:SeHA_C0055"/>
<dbReference type="HOGENOM" id="CLU_036838_2_2_6"/>
<dbReference type="Proteomes" id="UP000001866">
    <property type="component" value="Chromosome"/>
</dbReference>
<dbReference type="GO" id="GO:0005829">
    <property type="term" value="C:cytosol"/>
    <property type="evidence" value="ECO:0007669"/>
    <property type="project" value="TreeGrafter"/>
</dbReference>
<dbReference type="GO" id="GO:0008477">
    <property type="term" value="F:purine nucleosidase activity"/>
    <property type="evidence" value="ECO:0007669"/>
    <property type="project" value="TreeGrafter"/>
</dbReference>
<dbReference type="GO" id="GO:0006144">
    <property type="term" value="P:purine nucleobase metabolic process"/>
    <property type="evidence" value="ECO:0007669"/>
    <property type="project" value="UniProtKB-UniRule"/>
</dbReference>
<dbReference type="GO" id="GO:0006152">
    <property type="term" value="P:purine nucleoside catabolic process"/>
    <property type="evidence" value="ECO:0007669"/>
    <property type="project" value="TreeGrafter"/>
</dbReference>
<dbReference type="GO" id="GO:0006206">
    <property type="term" value="P:pyrimidine nucleobase metabolic process"/>
    <property type="evidence" value="ECO:0007669"/>
    <property type="project" value="UniProtKB-UniRule"/>
</dbReference>
<dbReference type="CDD" id="cd02651">
    <property type="entry name" value="nuc_hydro_IU_UC_XIUA"/>
    <property type="match status" value="1"/>
</dbReference>
<dbReference type="FunFam" id="3.90.245.10:FF:000002">
    <property type="entry name" value="Non-specific ribonucleoside hydrolase RihC"/>
    <property type="match status" value="1"/>
</dbReference>
<dbReference type="Gene3D" id="3.90.245.10">
    <property type="entry name" value="Ribonucleoside hydrolase-like"/>
    <property type="match status" value="1"/>
</dbReference>
<dbReference type="HAMAP" id="MF_01432">
    <property type="entry name" value="Nucleosid_hydro_RihC"/>
    <property type="match status" value="1"/>
</dbReference>
<dbReference type="InterPro" id="IPR001910">
    <property type="entry name" value="Inosine/uridine_hydrolase_dom"/>
</dbReference>
<dbReference type="InterPro" id="IPR023186">
    <property type="entry name" value="IUNH"/>
</dbReference>
<dbReference type="InterPro" id="IPR022976">
    <property type="entry name" value="Nucleosid_hydro_RihC_nonspecif"/>
</dbReference>
<dbReference type="InterPro" id="IPR036452">
    <property type="entry name" value="Ribo_hydro-like"/>
</dbReference>
<dbReference type="NCBIfam" id="NF008036">
    <property type="entry name" value="PRK10768.1"/>
    <property type="match status" value="1"/>
</dbReference>
<dbReference type="PANTHER" id="PTHR12304">
    <property type="entry name" value="INOSINE-URIDINE PREFERRING NUCLEOSIDE HYDROLASE"/>
    <property type="match status" value="1"/>
</dbReference>
<dbReference type="PANTHER" id="PTHR12304:SF15">
    <property type="entry name" value="NON-SPECIFIC RIBONUCLEOSIDE HYDROLASE RIHC"/>
    <property type="match status" value="1"/>
</dbReference>
<dbReference type="Pfam" id="PF01156">
    <property type="entry name" value="IU_nuc_hydro"/>
    <property type="match status" value="1"/>
</dbReference>
<dbReference type="SUPFAM" id="SSF53590">
    <property type="entry name" value="Nucleoside hydrolase"/>
    <property type="match status" value="1"/>
</dbReference>
<keyword id="KW-0326">Glycosidase</keyword>
<keyword id="KW-0378">Hydrolase</keyword>
<feature type="chain" id="PRO_1000145822" description="Non-specific ribonucleoside hydrolase RihC">
    <location>
        <begin position="1"/>
        <end position="306"/>
    </location>
</feature>
<feature type="active site" evidence="1">
    <location>
        <position position="235"/>
    </location>
</feature>